<evidence type="ECO:0000255" key="1"/>
<evidence type="ECO:0000255" key="2">
    <source>
        <dbReference type="PROSITE-ProRule" id="PRU00498"/>
    </source>
</evidence>
<evidence type="ECO:0000256" key="3">
    <source>
        <dbReference type="SAM" id="MobiDB-lite"/>
    </source>
</evidence>
<evidence type="ECO:0000269" key="4">
    <source>
    </source>
</evidence>
<evidence type="ECO:0000303" key="5">
    <source>
    </source>
</evidence>
<evidence type="ECO:0000303" key="6">
    <source ref="1"/>
</evidence>
<feature type="signal peptide" evidence="1">
    <location>
        <begin position="1"/>
        <end position="19"/>
    </location>
</feature>
<feature type="chain" id="PRO_5004331091" description="Appressoria-specific virulence factor GAS2" evidence="1">
    <location>
        <begin position="20"/>
        <end position="290"/>
    </location>
</feature>
<feature type="region of interest" description="Disordered" evidence="3">
    <location>
        <begin position="121"/>
        <end position="140"/>
    </location>
</feature>
<feature type="glycosylation site" description="N-linked (GlcNAc...) asparagine" evidence="2">
    <location>
        <position position="99"/>
    </location>
</feature>
<sequence>MKYTSAILISAFAATNVFAHGVVTEVQGANGVTLPGLTAIDGTPRDCPNPGCGSEADTAIIRDRELGTSRASALGRTQGGGPVDAAKMIELFMDGASVNKSDVVAARERHAANLARRATLLPRAGGGTSTPKGTEETGVKAATGIAATKGLPTTNDDGTINIVFHQVNQDGAGPLTADIDSTSGGQDVSAFQKAKITTNVPGLGIAGLSAAQTMDFPVAVQMPAGATCSGSVGGANNVCIARLRNAAVTGPFGGSVAFTQSPAARKRAIEYNLAKRRFARSLATDEEDDE</sequence>
<protein>
    <recommendedName>
        <fullName evidence="5">Appressoria-specific virulence factor GAS2</fullName>
    </recommendedName>
</protein>
<keyword id="KW-0963">Cytoplasm</keyword>
<keyword id="KW-0325">Glycoprotein</keyword>
<keyword id="KW-0732">Signal</keyword>
<keyword id="KW-0843">Virulence</keyword>
<gene>
    <name evidence="5" type="primary">GAS2</name>
    <name evidence="6" type="synonym">MAS1</name>
</gene>
<accession>Q9P470</accession>
<organism>
    <name type="scientific">Pyricularia oryzae</name>
    <name type="common">Rice blast fungus</name>
    <name type="synonym">Magnaporthe oryzae</name>
    <dbReference type="NCBI Taxonomy" id="318829"/>
    <lineage>
        <taxon>Eukaryota</taxon>
        <taxon>Fungi</taxon>
        <taxon>Dikarya</taxon>
        <taxon>Ascomycota</taxon>
        <taxon>Pezizomycotina</taxon>
        <taxon>Sordariomycetes</taxon>
        <taxon>Sordariomycetidae</taxon>
        <taxon>Magnaporthales</taxon>
        <taxon>Pyriculariaceae</taxon>
        <taxon>Pyricularia</taxon>
    </lineage>
</organism>
<dbReference type="EMBL" id="AF264035">
    <property type="protein sequence ID" value="AAF74764.1"/>
    <property type="molecule type" value="mRNA"/>
</dbReference>
<dbReference type="GlyCosmos" id="Q9P470">
    <property type="glycosylation" value="1 site, No reported glycans"/>
</dbReference>
<dbReference type="OMA" id="TMTFHQV"/>
<dbReference type="PHI-base" id="PHI:257"/>
<dbReference type="GO" id="GO:0005737">
    <property type="term" value="C:cytoplasm"/>
    <property type="evidence" value="ECO:0007669"/>
    <property type="project" value="UniProtKB-SubCell"/>
</dbReference>
<dbReference type="InterPro" id="IPR021476">
    <property type="entry name" value="Egh16-like"/>
</dbReference>
<dbReference type="PANTHER" id="PTHR34618:SF1">
    <property type="entry name" value="SECRETED PROTEIN"/>
    <property type="match status" value="1"/>
</dbReference>
<dbReference type="PANTHER" id="PTHR34618">
    <property type="entry name" value="SURFACE PROTEIN MAS1, PUTATIVE-RELATED"/>
    <property type="match status" value="1"/>
</dbReference>
<dbReference type="Pfam" id="PF11327">
    <property type="entry name" value="Egh16-like"/>
    <property type="match status" value="1"/>
</dbReference>
<reference key="1">
    <citation type="submission" date="2000-05" db="EMBL/GenBank/DDBJ databases">
        <title>Sequence analysis and characterization of genes expressed during appressorium formation in rice blast fungus, Magnaporthe grisea.</title>
        <authorList>
            <person name="Choi W."/>
            <person name="Dean R.A."/>
        </authorList>
    </citation>
    <scope>NUCLEOTIDE SEQUENCE [MRNA]</scope>
</reference>
<reference key="2">
    <citation type="journal article" date="2002" name="Plant Cell">
        <title>Two novel fungal virulence genes specifically expressed in appressoria of the rice blast fungus.</title>
        <authorList>
            <person name="Xue C."/>
            <person name="Park G."/>
            <person name="Choi W."/>
            <person name="Zheng L."/>
            <person name="Dean R.A."/>
            <person name="Xu J.R."/>
        </authorList>
    </citation>
    <scope>NUCLEOTIDE SEQUENCE [MRNA]</scope>
    <scope>INDUCTION</scope>
    <scope>FUNCTION</scope>
    <scope>DISRUPTION PHENOTYPE</scope>
    <scope>SUBCELLULAR LOCATION</scope>
    <source>
        <strain>Guyane 11</strain>
    </source>
</reference>
<reference key="3">
    <citation type="journal article" date="2013" name="Gene Expr. Patterns">
        <title>Complexity of roles and regulation of the PMK1-MAPK pathway in mycelium development, conidiation and appressorium formation in Magnaporthe oryzae.</title>
        <authorList>
            <person name="Jin Q."/>
            <person name="Li C."/>
            <person name="Li Y."/>
            <person name="Shang J."/>
            <person name="Li D."/>
            <person name="Chen B."/>
            <person name="Dong H."/>
        </authorList>
    </citation>
    <scope>FUNCTION</scope>
    <scope>DISRUPTION PHENOTYPE</scope>
</reference>
<comment type="function">
    <text evidence="4">Appressoria-specific virulence factor required for appressorial penetration in host and lesion development.</text>
</comment>
<comment type="subcellular location">
    <subcellularLocation>
        <location evidence="4">Cytoplasm</location>
    </subcellularLocation>
    <text evidence="4">Exclusively located in the cytoplasm of appressoria cells.</text>
</comment>
<comment type="induction">
    <text evidence="4">Expressed specifically during appressorium formation.</text>
</comment>
<comment type="disruption phenotype">
    <text evidence="4">Does not affect vegetative growth, conidiation, or appressoria formation, but redices in appressorial penetration and lesion development.</text>
</comment>
<name>GAS2_PYROR</name>
<proteinExistence type="evidence at transcript level"/>